<sequence>MCGIVGYIGDSEKKSILLEGLKELEYRGYDSAGLAVLSANRLEVFKTQGKLENLRTELKNKEFLNFGVSIAHTRWATHGKPSSANAHPHFTENLALVHNGIIENYASLKKELENKGHAFLSQTDTEVIAHLLEETLKSEGDLLKAFEKSISLLKGSYAILMLHKRAKESLFYAKSSSPLIVGKGKEGVFFASSLSVLAPKVDQFVILEENSVGQISLENFKDLNNIENMKDYAFENKDYSKGNFRNYLEKEIYEQHSSLLECLEGRLEALSVYCEIDPEFLENVSEITLCSCGSSYHASLASVYLFERLAKIRARAILASEYRYAHFKSNPNELFIAISQSGETADTLEALKLAKAQGLKTISLCNAPFSMMSRISDHTLLIRAGVERSVASTKAFSSQVMLLWLLSVYLGKQLGTISKEEERIQAKNMLNSVKAMKVEPKLHEKIKRLSKRYLHGHGFFYIGRDVFYPLALEGALKLKEISYLHAEGYASAEMKHGPIALVDSNLFTIALLSKHLLFDKTKSNIEELSARDSTICVLSSEILEIADDFIQLEESESYMEEFFRMNLAMQLLALEIAMRLNHDVDHPRNLAKSVTVE</sequence>
<accession>Q9ZJ94</accession>
<name>GLMS_HELPJ</name>
<feature type="initiator methionine" description="Removed" evidence="1">
    <location>
        <position position="1"/>
    </location>
</feature>
<feature type="chain" id="PRO_0000135341" description="Glutamine--fructose-6-phosphate aminotransferase [isomerizing]">
    <location>
        <begin position="2"/>
        <end position="597"/>
    </location>
</feature>
<feature type="domain" description="Glutamine amidotransferase type-2" evidence="1">
    <location>
        <begin position="2"/>
        <end position="218"/>
    </location>
</feature>
<feature type="domain" description="SIS 1" evidence="1">
    <location>
        <begin position="276"/>
        <end position="416"/>
    </location>
</feature>
<feature type="domain" description="SIS 2" evidence="1">
    <location>
        <begin position="449"/>
        <end position="587"/>
    </location>
</feature>
<feature type="active site" description="Nucleophile; for GATase activity" evidence="1">
    <location>
        <position position="2"/>
    </location>
</feature>
<feature type="active site" description="For Fru-6P isomerization activity" evidence="1">
    <location>
        <position position="592"/>
    </location>
</feature>
<comment type="function">
    <text evidence="1">Catalyzes the first step in hexosamine metabolism, converting fructose-6P into glucosamine-6P using glutamine as a nitrogen source.</text>
</comment>
<comment type="catalytic activity">
    <reaction evidence="1">
        <text>D-fructose 6-phosphate + L-glutamine = D-glucosamine 6-phosphate + L-glutamate</text>
        <dbReference type="Rhea" id="RHEA:13237"/>
        <dbReference type="ChEBI" id="CHEBI:29985"/>
        <dbReference type="ChEBI" id="CHEBI:58359"/>
        <dbReference type="ChEBI" id="CHEBI:58725"/>
        <dbReference type="ChEBI" id="CHEBI:61527"/>
        <dbReference type="EC" id="2.6.1.16"/>
    </reaction>
</comment>
<comment type="subunit">
    <text evidence="1">Homodimer.</text>
</comment>
<comment type="subcellular location">
    <subcellularLocation>
        <location evidence="1">Cytoplasm</location>
    </subcellularLocation>
</comment>
<proteinExistence type="inferred from homology"/>
<gene>
    <name evidence="1" type="primary">glmS</name>
    <name type="ordered locus">jhp_1420</name>
</gene>
<reference key="1">
    <citation type="journal article" date="1999" name="Nature">
        <title>Genomic sequence comparison of two unrelated isolates of the human gastric pathogen Helicobacter pylori.</title>
        <authorList>
            <person name="Alm R.A."/>
            <person name="Ling L.-S.L."/>
            <person name="Moir D.T."/>
            <person name="King B.L."/>
            <person name="Brown E.D."/>
            <person name="Doig P.C."/>
            <person name="Smith D.R."/>
            <person name="Noonan B."/>
            <person name="Guild B.C."/>
            <person name="deJonge B.L."/>
            <person name="Carmel G."/>
            <person name="Tummino P.J."/>
            <person name="Caruso A."/>
            <person name="Uria-Nickelsen M."/>
            <person name="Mills D.M."/>
            <person name="Ives C."/>
            <person name="Gibson R."/>
            <person name="Merberg D."/>
            <person name="Mills S.D."/>
            <person name="Jiang Q."/>
            <person name="Taylor D.E."/>
            <person name="Vovis G.F."/>
            <person name="Trust T.J."/>
        </authorList>
    </citation>
    <scope>NUCLEOTIDE SEQUENCE [LARGE SCALE GENOMIC DNA]</scope>
    <source>
        <strain>J99 / ATCC 700824</strain>
    </source>
</reference>
<organism>
    <name type="scientific">Helicobacter pylori (strain J99 / ATCC 700824)</name>
    <name type="common">Campylobacter pylori J99</name>
    <dbReference type="NCBI Taxonomy" id="85963"/>
    <lineage>
        <taxon>Bacteria</taxon>
        <taxon>Pseudomonadati</taxon>
        <taxon>Campylobacterota</taxon>
        <taxon>Epsilonproteobacteria</taxon>
        <taxon>Campylobacterales</taxon>
        <taxon>Helicobacteraceae</taxon>
        <taxon>Helicobacter</taxon>
    </lineage>
</organism>
<keyword id="KW-0032">Aminotransferase</keyword>
<keyword id="KW-0963">Cytoplasm</keyword>
<keyword id="KW-0315">Glutamine amidotransferase</keyword>
<keyword id="KW-0677">Repeat</keyword>
<keyword id="KW-0808">Transferase</keyword>
<dbReference type="EC" id="2.6.1.16" evidence="1"/>
<dbReference type="EMBL" id="AE001439">
    <property type="protein sequence ID" value="AAD06999.1"/>
    <property type="molecule type" value="Genomic_DNA"/>
</dbReference>
<dbReference type="PIR" id="H71809">
    <property type="entry name" value="H71809"/>
</dbReference>
<dbReference type="RefSeq" id="WP_000334347.1">
    <property type="nucleotide sequence ID" value="NC_000921.1"/>
</dbReference>
<dbReference type="SMR" id="Q9ZJ94"/>
<dbReference type="KEGG" id="hpj:jhp_1420"/>
<dbReference type="PATRIC" id="fig|85963.30.peg.1127"/>
<dbReference type="eggNOG" id="COG0449">
    <property type="taxonomic scope" value="Bacteria"/>
</dbReference>
<dbReference type="Proteomes" id="UP000000804">
    <property type="component" value="Chromosome"/>
</dbReference>
<dbReference type="GO" id="GO:0005829">
    <property type="term" value="C:cytosol"/>
    <property type="evidence" value="ECO:0007669"/>
    <property type="project" value="TreeGrafter"/>
</dbReference>
<dbReference type="GO" id="GO:0097367">
    <property type="term" value="F:carbohydrate derivative binding"/>
    <property type="evidence" value="ECO:0007669"/>
    <property type="project" value="InterPro"/>
</dbReference>
<dbReference type="GO" id="GO:0004360">
    <property type="term" value="F:glutamine-fructose-6-phosphate transaminase (isomerizing) activity"/>
    <property type="evidence" value="ECO:0007669"/>
    <property type="project" value="UniProtKB-UniRule"/>
</dbReference>
<dbReference type="GO" id="GO:0005975">
    <property type="term" value="P:carbohydrate metabolic process"/>
    <property type="evidence" value="ECO:0007669"/>
    <property type="project" value="UniProtKB-UniRule"/>
</dbReference>
<dbReference type="GO" id="GO:0006002">
    <property type="term" value="P:fructose 6-phosphate metabolic process"/>
    <property type="evidence" value="ECO:0007669"/>
    <property type="project" value="TreeGrafter"/>
</dbReference>
<dbReference type="GO" id="GO:0006487">
    <property type="term" value="P:protein N-linked glycosylation"/>
    <property type="evidence" value="ECO:0007669"/>
    <property type="project" value="TreeGrafter"/>
</dbReference>
<dbReference type="GO" id="GO:0006047">
    <property type="term" value="P:UDP-N-acetylglucosamine metabolic process"/>
    <property type="evidence" value="ECO:0007669"/>
    <property type="project" value="TreeGrafter"/>
</dbReference>
<dbReference type="CDD" id="cd00714">
    <property type="entry name" value="GFAT"/>
    <property type="match status" value="1"/>
</dbReference>
<dbReference type="CDD" id="cd05008">
    <property type="entry name" value="SIS_GlmS_GlmD_1"/>
    <property type="match status" value="1"/>
</dbReference>
<dbReference type="CDD" id="cd05009">
    <property type="entry name" value="SIS_GlmS_GlmD_2"/>
    <property type="match status" value="1"/>
</dbReference>
<dbReference type="FunFam" id="3.40.50.10490:FF:000001">
    <property type="entry name" value="Glutamine--fructose-6-phosphate aminotransferase [isomerizing]"/>
    <property type="match status" value="1"/>
</dbReference>
<dbReference type="FunFam" id="3.60.20.10:FF:000134">
    <property type="entry name" value="Glutamine--fructose-6-phosphate aminotransferase [isomerizing]"/>
    <property type="match status" value="1"/>
</dbReference>
<dbReference type="Gene3D" id="3.40.50.10490">
    <property type="entry name" value="Glucose-6-phosphate isomerase like protein, domain 1"/>
    <property type="match status" value="2"/>
</dbReference>
<dbReference type="Gene3D" id="3.60.20.10">
    <property type="entry name" value="Glutamine Phosphoribosylpyrophosphate, subunit 1, domain 1"/>
    <property type="match status" value="1"/>
</dbReference>
<dbReference type="HAMAP" id="MF_00164">
    <property type="entry name" value="GlmS"/>
    <property type="match status" value="1"/>
</dbReference>
<dbReference type="InterPro" id="IPR017932">
    <property type="entry name" value="GATase_2_dom"/>
</dbReference>
<dbReference type="InterPro" id="IPR005855">
    <property type="entry name" value="GFAT"/>
</dbReference>
<dbReference type="InterPro" id="IPR047084">
    <property type="entry name" value="GFAT_N"/>
</dbReference>
<dbReference type="InterPro" id="IPR035466">
    <property type="entry name" value="GlmS/AgaS_SIS"/>
</dbReference>
<dbReference type="InterPro" id="IPR035490">
    <property type="entry name" value="GlmS/FrlB_SIS"/>
</dbReference>
<dbReference type="InterPro" id="IPR029055">
    <property type="entry name" value="Ntn_hydrolases_N"/>
</dbReference>
<dbReference type="InterPro" id="IPR001347">
    <property type="entry name" value="SIS_dom"/>
</dbReference>
<dbReference type="InterPro" id="IPR046348">
    <property type="entry name" value="SIS_dom_sf"/>
</dbReference>
<dbReference type="NCBIfam" id="TIGR01135">
    <property type="entry name" value="glmS"/>
    <property type="match status" value="1"/>
</dbReference>
<dbReference type="NCBIfam" id="NF001484">
    <property type="entry name" value="PRK00331.1"/>
    <property type="match status" value="1"/>
</dbReference>
<dbReference type="PANTHER" id="PTHR10937">
    <property type="entry name" value="GLUCOSAMINE--FRUCTOSE-6-PHOSPHATE AMINOTRANSFERASE, ISOMERIZING"/>
    <property type="match status" value="1"/>
</dbReference>
<dbReference type="PANTHER" id="PTHR10937:SF0">
    <property type="entry name" value="GLUTAMINE--FRUCTOSE-6-PHOSPHATE TRANSAMINASE (ISOMERIZING)"/>
    <property type="match status" value="1"/>
</dbReference>
<dbReference type="Pfam" id="PF13522">
    <property type="entry name" value="GATase_6"/>
    <property type="match status" value="1"/>
</dbReference>
<dbReference type="Pfam" id="PF01380">
    <property type="entry name" value="SIS"/>
    <property type="match status" value="2"/>
</dbReference>
<dbReference type="SUPFAM" id="SSF56235">
    <property type="entry name" value="N-terminal nucleophile aminohydrolases (Ntn hydrolases)"/>
    <property type="match status" value="1"/>
</dbReference>
<dbReference type="SUPFAM" id="SSF53697">
    <property type="entry name" value="SIS domain"/>
    <property type="match status" value="1"/>
</dbReference>
<dbReference type="PROSITE" id="PS51278">
    <property type="entry name" value="GATASE_TYPE_2"/>
    <property type="match status" value="1"/>
</dbReference>
<dbReference type="PROSITE" id="PS51464">
    <property type="entry name" value="SIS"/>
    <property type="match status" value="2"/>
</dbReference>
<protein>
    <recommendedName>
        <fullName evidence="1">Glutamine--fructose-6-phosphate aminotransferase [isomerizing]</fullName>
        <ecNumber evidence="1">2.6.1.16</ecNumber>
    </recommendedName>
    <alternativeName>
        <fullName evidence="1">D-fructose-6-phosphate amidotransferase</fullName>
    </alternativeName>
    <alternativeName>
        <fullName evidence="1">GFAT</fullName>
    </alternativeName>
    <alternativeName>
        <fullName evidence="1">Glucosamine-6-phosphate synthase</fullName>
    </alternativeName>
    <alternativeName>
        <fullName evidence="1">Hexosephosphate aminotransferase</fullName>
    </alternativeName>
    <alternativeName>
        <fullName evidence="1">L-glutamine--D-fructose-6-phosphate amidotransferase</fullName>
    </alternativeName>
</protein>
<evidence type="ECO:0000255" key="1">
    <source>
        <dbReference type="HAMAP-Rule" id="MF_00164"/>
    </source>
</evidence>